<feature type="chain" id="PRO_1000216181" description="Transcription factor E">
    <location>
        <begin position="1"/>
        <end position="178"/>
    </location>
</feature>
<feature type="domain" description="HTH TFE/IIEalpha-type" evidence="1">
    <location>
        <begin position="4"/>
        <end position="88"/>
    </location>
</feature>
<protein>
    <recommendedName>
        <fullName evidence="1">Transcription factor E</fullName>
        <shortName evidence="1">TFE</shortName>
    </recommendedName>
    <alternativeName>
        <fullName evidence="1">TFIIE subunit alpha homolog</fullName>
    </alternativeName>
    <alternativeName>
        <fullName evidence="1">Transcription initiation factor TFIIE</fullName>
    </alternativeName>
</protein>
<keyword id="KW-0238">DNA-binding</keyword>
<keyword id="KW-0804">Transcription</keyword>
<keyword id="KW-0805">Transcription regulation</keyword>
<proteinExistence type="inferred from homology"/>
<organism>
    <name type="scientific">Saccharolobus islandicus (strain M.16.4 / Kamchatka #3)</name>
    <name type="common">Sulfolobus islandicus</name>
    <dbReference type="NCBI Taxonomy" id="426118"/>
    <lineage>
        <taxon>Archaea</taxon>
        <taxon>Thermoproteota</taxon>
        <taxon>Thermoprotei</taxon>
        <taxon>Sulfolobales</taxon>
        <taxon>Sulfolobaceae</taxon>
        <taxon>Saccharolobus</taxon>
    </lineage>
</organism>
<dbReference type="EMBL" id="CP001402">
    <property type="protein sequence ID" value="ACR42484.1"/>
    <property type="molecule type" value="Genomic_DNA"/>
</dbReference>
<dbReference type="RefSeq" id="WP_012711838.1">
    <property type="nucleotide sequence ID" value="NC_012726.1"/>
</dbReference>
<dbReference type="SMR" id="C4KIS0"/>
<dbReference type="GeneID" id="84062185"/>
<dbReference type="KEGG" id="sid:M164_1881"/>
<dbReference type="HOGENOM" id="CLU_100097_0_0_2"/>
<dbReference type="Proteomes" id="UP000001479">
    <property type="component" value="Chromosome"/>
</dbReference>
<dbReference type="GO" id="GO:0003677">
    <property type="term" value="F:DNA binding"/>
    <property type="evidence" value="ECO:0007669"/>
    <property type="project" value="UniProtKB-KW"/>
</dbReference>
<dbReference type="GO" id="GO:0006355">
    <property type="term" value="P:regulation of DNA-templated transcription"/>
    <property type="evidence" value="ECO:0007669"/>
    <property type="project" value="InterPro"/>
</dbReference>
<dbReference type="GO" id="GO:0006367">
    <property type="term" value="P:transcription initiation at RNA polymerase II promoter"/>
    <property type="evidence" value="ECO:0007669"/>
    <property type="project" value="InterPro"/>
</dbReference>
<dbReference type="Gene3D" id="1.10.10.10">
    <property type="entry name" value="Winged helix-like DNA-binding domain superfamily/Winged helix DNA-binding domain"/>
    <property type="match status" value="1"/>
</dbReference>
<dbReference type="HAMAP" id="MF_01909">
    <property type="entry name" value="TFE_arch"/>
    <property type="match status" value="1"/>
</dbReference>
<dbReference type="InterPro" id="IPR016481">
    <property type="entry name" value="TF_E_archaea"/>
</dbReference>
<dbReference type="InterPro" id="IPR039997">
    <property type="entry name" value="TFE"/>
</dbReference>
<dbReference type="InterPro" id="IPR017919">
    <property type="entry name" value="TFIIE/TFIIEa_HTH"/>
</dbReference>
<dbReference type="InterPro" id="IPR002853">
    <property type="entry name" value="TFIIE_asu"/>
</dbReference>
<dbReference type="InterPro" id="IPR024550">
    <property type="entry name" value="TFIIEa/SarR/Rpc3_HTH_dom"/>
</dbReference>
<dbReference type="InterPro" id="IPR036388">
    <property type="entry name" value="WH-like_DNA-bd_sf"/>
</dbReference>
<dbReference type="InterPro" id="IPR036390">
    <property type="entry name" value="WH_DNA-bd_sf"/>
</dbReference>
<dbReference type="PANTHER" id="PTHR13097:SF7">
    <property type="entry name" value="GENERAL TRANSCRIPTION FACTOR IIE SUBUNIT 1"/>
    <property type="match status" value="1"/>
</dbReference>
<dbReference type="PANTHER" id="PTHR13097">
    <property type="entry name" value="TRANSCRIPTION INITIATION FACTOR IIE, ALPHA SUBUNIT"/>
    <property type="match status" value="1"/>
</dbReference>
<dbReference type="Pfam" id="PF02002">
    <property type="entry name" value="TFIIE_alpha"/>
    <property type="match status" value="1"/>
</dbReference>
<dbReference type="PIRSF" id="PIRSF006373">
    <property type="entry name" value="TF_E_archaea"/>
    <property type="match status" value="1"/>
</dbReference>
<dbReference type="SMART" id="SM00531">
    <property type="entry name" value="TFIIE"/>
    <property type="match status" value="1"/>
</dbReference>
<dbReference type="SUPFAM" id="SSF46785">
    <property type="entry name" value="Winged helix' DNA-binding domain"/>
    <property type="match status" value="1"/>
</dbReference>
<dbReference type="PROSITE" id="PS51344">
    <property type="entry name" value="HTH_TFE_IIE"/>
    <property type="match status" value="1"/>
</dbReference>
<reference key="1">
    <citation type="journal article" date="2009" name="Proc. Natl. Acad. Sci. U.S.A.">
        <title>Biogeography of the Sulfolobus islandicus pan-genome.</title>
        <authorList>
            <person name="Reno M.L."/>
            <person name="Held N.L."/>
            <person name="Fields C.J."/>
            <person name="Burke P.V."/>
            <person name="Whitaker R.J."/>
        </authorList>
    </citation>
    <scope>NUCLEOTIDE SEQUENCE [LARGE SCALE GENOMIC DNA]</scope>
    <source>
        <strain>M.16.4 / Kamchatka #3</strain>
    </source>
</reference>
<evidence type="ECO:0000255" key="1">
    <source>
        <dbReference type="HAMAP-Rule" id="MF_01909"/>
    </source>
</evidence>
<sequence>MVNAEDLFINLAKSLLGDDVIDVLRVLLEKGTEMTDEEIANQLNIKVNDVRKKLNLLEEQGFVSYRKTRDKDSGWFIYYWKPNIDQINEILLNRKRLILDKLKSRLEYEKNNTFFICPQDNSRYSFEEAFENEFKCLKCGSQLTYYDTEKIKSFLEQKIRQIEEEIDKETKLGANKSH</sequence>
<name>TFE_SACI6</name>
<gene>
    <name evidence="1" type="primary">tfe</name>
    <name type="ordered locus">M164_1881</name>
</gene>
<accession>C4KIS0</accession>
<comment type="function">
    <text evidence="1">Transcription factor that plays a role in the activation of archaeal genes transcribed by RNA polymerase. Facilitates transcription initiation by enhancing TATA-box recognition by TATA-box-binding protein (Tbp), and transcription factor B (Tfb) and RNA polymerase recruitment. Not absolutely required for transcription in vitro, but particularly important in cases where Tbp or Tfb function is not optimal. It dynamically alters the nucleic acid-binding properties of RNA polymerases by stabilizing the initiation complex and destabilizing elongation complexes. Seems to translocate with the RNA polymerase following initiation and acts by binding to the non template strand of the transcription bubble in elongation complexes.</text>
</comment>
<comment type="subunit">
    <text evidence="1">Monomer. Interaction with RNA polymerase subunits RpoF and RpoE is necessary for Tfe stimulatory transcription activity. Able to interact with Tbp and RNA polymerase in the absence of DNA promoter. Interacts both with the preinitiation and elongation complexes.</text>
</comment>
<comment type="domain">
    <text evidence="1">The winged helix domain is involved in binding to DNA in the preinitiation complex.</text>
</comment>
<comment type="similarity">
    <text evidence="1">Belongs to the TFE family.</text>
</comment>